<protein>
    <recommendedName>
        <fullName evidence="1">Glycine--tRNA ligase beta subunit</fullName>
        <ecNumber evidence="1">6.1.1.14</ecNumber>
    </recommendedName>
    <alternativeName>
        <fullName evidence="1">Glycyl-tRNA synthetase beta subunit</fullName>
        <shortName evidence="1">GlyRS</shortName>
    </alternativeName>
</protein>
<keyword id="KW-0030">Aminoacyl-tRNA synthetase</keyword>
<keyword id="KW-0067">ATP-binding</keyword>
<keyword id="KW-0963">Cytoplasm</keyword>
<keyword id="KW-0436">Ligase</keyword>
<keyword id="KW-0547">Nucleotide-binding</keyword>
<keyword id="KW-0648">Protein biosynthesis</keyword>
<keyword id="KW-1185">Reference proteome</keyword>
<evidence type="ECO:0000255" key="1">
    <source>
        <dbReference type="HAMAP-Rule" id="MF_00255"/>
    </source>
</evidence>
<organism>
    <name type="scientific">Chromohalobacter salexigens (strain ATCC BAA-138 / DSM 3043 / CIP 106854 / NCIMB 13768 / 1H11)</name>
    <dbReference type="NCBI Taxonomy" id="290398"/>
    <lineage>
        <taxon>Bacteria</taxon>
        <taxon>Pseudomonadati</taxon>
        <taxon>Pseudomonadota</taxon>
        <taxon>Gammaproteobacteria</taxon>
        <taxon>Oceanospirillales</taxon>
        <taxon>Halomonadaceae</taxon>
        <taxon>Chromohalobacter</taxon>
    </lineage>
</organism>
<comment type="catalytic activity">
    <reaction evidence="1">
        <text>tRNA(Gly) + glycine + ATP = glycyl-tRNA(Gly) + AMP + diphosphate</text>
        <dbReference type="Rhea" id="RHEA:16013"/>
        <dbReference type="Rhea" id="RHEA-COMP:9664"/>
        <dbReference type="Rhea" id="RHEA-COMP:9683"/>
        <dbReference type="ChEBI" id="CHEBI:30616"/>
        <dbReference type="ChEBI" id="CHEBI:33019"/>
        <dbReference type="ChEBI" id="CHEBI:57305"/>
        <dbReference type="ChEBI" id="CHEBI:78442"/>
        <dbReference type="ChEBI" id="CHEBI:78522"/>
        <dbReference type="ChEBI" id="CHEBI:456215"/>
        <dbReference type="EC" id="6.1.1.14"/>
    </reaction>
</comment>
<comment type="subunit">
    <text evidence="1">Tetramer of two alpha and two beta subunits.</text>
</comment>
<comment type="subcellular location">
    <subcellularLocation>
        <location evidence="1">Cytoplasm</location>
    </subcellularLocation>
</comment>
<comment type="similarity">
    <text evidence="1">Belongs to the class-II aminoacyl-tRNA synthetase family.</text>
</comment>
<reference key="1">
    <citation type="journal article" date="2011" name="Stand. Genomic Sci.">
        <title>Complete genome sequence of the halophilic and highly halotolerant Chromohalobacter salexigens type strain (1H11(T)).</title>
        <authorList>
            <person name="Copeland A."/>
            <person name="O'Connor K."/>
            <person name="Lucas S."/>
            <person name="Lapidus A."/>
            <person name="Berry K.W."/>
            <person name="Detter J.C."/>
            <person name="Del Rio T.G."/>
            <person name="Hammon N."/>
            <person name="Dalin E."/>
            <person name="Tice H."/>
            <person name="Pitluck S."/>
            <person name="Bruce D."/>
            <person name="Goodwin L."/>
            <person name="Han C."/>
            <person name="Tapia R."/>
            <person name="Saunders E."/>
            <person name="Schmutz J."/>
            <person name="Brettin T."/>
            <person name="Larimer F."/>
            <person name="Land M."/>
            <person name="Hauser L."/>
            <person name="Vargas C."/>
            <person name="Nieto J.J."/>
            <person name="Kyrpides N.C."/>
            <person name="Ivanova N."/>
            <person name="Goker M."/>
            <person name="Klenk H.P."/>
            <person name="Csonka L.N."/>
            <person name="Woyke T."/>
        </authorList>
    </citation>
    <scope>NUCLEOTIDE SEQUENCE [LARGE SCALE GENOMIC DNA]</scope>
    <source>
        <strain>ATCC BAA-138 / DSM 3043 / CIP 106854 / NCIMB 13768 / 1H11</strain>
    </source>
</reference>
<feature type="chain" id="PRO_1000006352" description="Glycine--tRNA ligase beta subunit">
    <location>
        <begin position="1"/>
        <end position="688"/>
    </location>
</feature>
<accession>Q1R1N7</accession>
<sequence length="688" mass="75305">MASTPLLVELGAEELPPSAIEPLALALRDGIAKGLADADVAFASAHAYATPRRLAVRVEGLDDKQPDRDIERRGPALAAAFKDGQPTKAAEGFARSCGVTVDDLIHLETDKGTWLGYRYQESGEATTALLPAIVERAVQALPVPKNMRWGASRTEFSRPVHWLVMLYGADVVPATVLGLEAGRTTRGHRFHAPDAIDLAHADDYLDALENAYVLADMQRRRERIREQVLAEAEVNEATAVIDEDLLDEVSGLVEWPVALTGSFDERFLDVPAECLISSMKANQKYFHLLDAQGTLKPLFITVSNIESRDPQQVIEGNEKVIRPRLADAAFFYDTDRKQSLASRRSALESVVFQQSLGTLADKAQRIEAISSFIASRIGGDADHASRAAQLAKCDLVTEMVLEFPELQGIMGTYYARQDGEPEEVAQALHEQYLPRFASDDVPATPAGLALALADRLDTLTGIFGIGQRPSGTKDPFALRRAAIGVLNILVKAELDLDLRELLELAAAQHGDLPKAEGLVDDVLDYMLDRFRAWTQDEGIAVEVYLAVRARPVTRPLDFARRIRAVHAFSQREEAVALAAANKRVSNILSKQQHDGSTSVDTGLLQAEAETTLSTALEQCHQSVRPLLDAARYAEALDVLAQLRGPVDAFFEDVMVMAEDEAVRRNRLALLASLQSLFLEVADIAQLQQ</sequence>
<gene>
    <name evidence="1" type="primary">glyS</name>
    <name type="ordered locus">Csal_0006</name>
</gene>
<dbReference type="EC" id="6.1.1.14" evidence="1"/>
<dbReference type="EMBL" id="CP000285">
    <property type="protein sequence ID" value="ABE57371.1"/>
    <property type="molecule type" value="Genomic_DNA"/>
</dbReference>
<dbReference type="RefSeq" id="WP_011505317.1">
    <property type="nucleotide sequence ID" value="NC_007963.1"/>
</dbReference>
<dbReference type="SMR" id="Q1R1N7"/>
<dbReference type="STRING" id="290398.Csal_0006"/>
<dbReference type="GeneID" id="95332759"/>
<dbReference type="KEGG" id="csa:Csal_0006"/>
<dbReference type="eggNOG" id="COG0751">
    <property type="taxonomic scope" value="Bacteria"/>
</dbReference>
<dbReference type="HOGENOM" id="CLU_007220_2_2_6"/>
<dbReference type="OrthoDB" id="9775440at2"/>
<dbReference type="Proteomes" id="UP000000239">
    <property type="component" value="Chromosome"/>
</dbReference>
<dbReference type="GO" id="GO:0005829">
    <property type="term" value="C:cytosol"/>
    <property type="evidence" value="ECO:0007669"/>
    <property type="project" value="TreeGrafter"/>
</dbReference>
<dbReference type="GO" id="GO:0004814">
    <property type="term" value="F:arginine-tRNA ligase activity"/>
    <property type="evidence" value="ECO:0007669"/>
    <property type="project" value="InterPro"/>
</dbReference>
<dbReference type="GO" id="GO:0005524">
    <property type="term" value="F:ATP binding"/>
    <property type="evidence" value="ECO:0007669"/>
    <property type="project" value="UniProtKB-UniRule"/>
</dbReference>
<dbReference type="GO" id="GO:0004820">
    <property type="term" value="F:glycine-tRNA ligase activity"/>
    <property type="evidence" value="ECO:0007669"/>
    <property type="project" value="UniProtKB-UniRule"/>
</dbReference>
<dbReference type="GO" id="GO:0006420">
    <property type="term" value="P:arginyl-tRNA aminoacylation"/>
    <property type="evidence" value="ECO:0007669"/>
    <property type="project" value="InterPro"/>
</dbReference>
<dbReference type="GO" id="GO:0006426">
    <property type="term" value="P:glycyl-tRNA aminoacylation"/>
    <property type="evidence" value="ECO:0007669"/>
    <property type="project" value="UniProtKB-UniRule"/>
</dbReference>
<dbReference type="HAMAP" id="MF_00255">
    <property type="entry name" value="Gly_tRNA_synth_beta"/>
    <property type="match status" value="1"/>
</dbReference>
<dbReference type="InterPro" id="IPR008909">
    <property type="entry name" value="DALR_anticod-bd"/>
</dbReference>
<dbReference type="InterPro" id="IPR015944">
    <property type="entry name" value="Gly-tRNA-synth_bsu"/>
</dbReference>
<dbReference type="InterPro" id="IPR006194">
    <property type="entry name" value="Gly-tRNA-synth_heterodimer"/>
</dbReference>
<dbReference type="NCBIfam" id="TIGR00211">
    <property type="entry name" value="glyS"/>
    <property type="match status" value="1"/>
</dbReference>
<dbReference type="PANTHER" id="PTHR30075:SF2">
    <property type="entry name" value="GLYCINE--TRNA LIGASE, CHLOROPLASTIC_MITOCHONDRIAL 2"/>
    <property type="match status" value="1"/>
</dbReference>
<dbReference type="PANTHER" id="PTHR30075">
    <property type="entry name" value="GLYCYL-TRNA SYNTHETASE"/>
    <property type="match status" value="1"/>
</dbReference>
<dbReference type="Pfam" id="PF05746">
    <property type="entry name" value="DALR_1"/>
    <property type="match status" value="1"/>
</dbReference>
<dbReference type="Pfam" id="PF02092">
    <property type="entry name" value="tRNA_synt_2f"/>
    <property type="match status" value="1"/>
</dbReference>
<dbReference type="PRINTS" id="PR01045">
    <property type="entry name" value="TRNASYNTHGB"/>
</dbReference>
<dbReference type="SMART" id="SM00836">
    <property type="entry name" value="DALR_1"/>
    <property type="match status" value="1"/>
</dbReference>
<dbReference type="SUPFAM" id="SSF109604">
    <property type="entry name" value="HD-domain/PDEase-like"/>
    <property type="match status" value="1"/>
</dbReference>
<dbReference type="PROSITE" id="PS50861">
    <property type="entry name" value="AA_TRNA_LIGASE_II_GLYAB"/>
    <property type="match status" value="1"/>
</dbReference>
<name>SYGB_CHRSD</name>
<proteinExistence type="inferred from homology"/>